<name>RL14_XANAC</name>
<keyword id="KW-0687">Ribonucleoprotein</keyword>
<keyword id="KW-0689">Ribosomal protein</keyword>
<keyword id="KW-0694">RNA-binding</keyword>
<keyword id="KW-0699">rRNA-binding</keyword>
<evidence type="ECO:0000255" key="1">
    <source>
        <dbReference type="HAMAP-Rule" id="MF_01367"/>
    </source>
</evidence>
<evidence type="ECO:0000305" key="2"/>
<reference key="1">
    <citation type="journal article" date="2002" name="Nature">
        <title>Comparison of the genomes of two Xanthomonas pathogens with differing host specificities.</title>
        <authorList>
            <person name="da Silva A.C.R."/>
            <person name="Ferro J.A."/>
            <person name="Reinach F.C."/>
            <person name="Farah C.S."/>
            <person name="Furlan L.R."/>
            <person name="Quaggio R.B."/>
            <person name="Monteiro-Vitorello C.B."/>
            <person name="Van Sluys M.A."/>
            <person name="Almeida N.F. Jr."/>
            <person name="Alves L.M.C."/>
            <person name="do Amaral A.M."/>
            <person name="Bertolini M.C."/>
            <person name="Camargo L.E.A."/>
            <person name="Camarotte G."/>
            <person name="Cannavan F."/>
            <person name="Cardozo J."/>
            <person name="Chambergo F."/>
            <person name="Ciapina L.P."/>
            <person name="Cicarelli R.M.B."/>
            <person name="Coutinho L.L."/>
            <person name="Cursino-Santos J.R."/>
            <person name="El-Dorry H."/>
            <person name="Faria J.B."/>
            <person name="Ferreira A.J.S."/>
            <person name="Ferreira R.C.C."/>
            <person name="Ferro M.I.T."/>
            <person name="Formighieri E.F."/>
            <person name="Franco M.C."/>
            <person name="Greggio C.C."/>
            <person name="Gruber A."/>
            <person name="Katsuyama A.M."/>
            <person name="Kishi L.T."/>
            <person name="Leite R.P."/>
            <person name="Lemos E.G.M."/>
            <person name="Lemos M.V.F."/>
            <person name="Locali E.C."/>
            <person name="Machado M.A."/>
            <person name="Madeira A.M.B.N."/>
            <person name="Martinez-Rossi N.M."/>
            <person name="Martins E.C."/>
            <person name="Meidanis J."/>
            <person name="Menck C.F.M."/>
            <person name="Miyaki C.Y."/>
            <person name="Moon D.H."/>
            <person name="Moreira L.M."/>
            <person name="Novo M.T.M."/>
            <person name="Okura V.K."/>
            <person name="Oliveira M.C."/>
            <person name="Oliveira V.R."/>
            <person name="Pereira H.A."/>
            <person name="Rossi A."/>
            <person name="Sena J.A.D."/>
            <person name="Silva C."/>
            <person name="de Souza R.F."/>
            <person name="Spinola L.A.F."/>
            <person name="Takita M.A."/>
            <person name="Tamura R.E."/>
            <person name="Teixeira E.C."/>
            <person name="Tezza R.I.D."/>
            <person name="Trindade dos Santos M."/>
            <person name="Truffi D."/>
            <person name="Tsai S.M."/>
            <person name="White F.F."/>
            <person name="Setubal J.C."/>
            <person name="Kitajima J.P."/>
        </authorList>
    </citation>
    <scope>NUCLEOTIDE SEQUENCE [LARGE SCALE GENOMIC DNA]</scope>
    <source>
        <strain>306</strain>
    </source>
</reference>
<accession>Q8NL02</accession>
<comment type="function">
    <text evidence="1">Binds to 23S rRNA. Forms part of two intersubunit bridges in the 70S ribosome.</text>
</comment>
<comment type="subunit">
    <text evidence="1">Part of the 50S ribosomal subunit. Forms a cluster with proteins L3 and L19. In the 70S ribosome, L14 and L19 interact and together make contacts with the 16S rRNA in bridges B5 and B8.</text>
</comment>
<comment type="similarity">
    <text evidence="1">Belongs to the universal ribosomal protein uL14 family.</text>
</comment>
<dbReference type="EMBL" id="AE008923">
    <property type="protein sequence ID" value="AAM35865.1"/>
    <property type="molecule type" value="Genomic_DNA"/>
</dbReference>
<dbReference type="RefSeq" id="WP_003486699.1">
    <property type="nucleotide sequence ID" value="NC_003919.1"/>
</dbReference>
<dbReference type="SMR" id="Q8NL02"/>
<dbReference type="GeneID" id="97509346"/>
<dbReference type="KEGG" id="xac:XAC0982"/>
<dbReference type="eggNOG" id="COG0093">
    <property type="taxonomic scope" value="Bacteria"/>
</dbReference>
<dbReference type="HOGENOM" id="CLU_095071_2_1_6"/>
<dbReference type="Proteomes" id="UP000000576">
    <property type="component" value="Chromosome"/>
</dbReference>
<dbReference type="GO" id="GO:0022625">
    <property type="term" value="C:cytosolic large ribosomal subunit"/>
    <property type="evidence" value="ECO:0007669"/>
    <property type="project" value="TreeGrafter"/>
</dbReference>
<dbReference type="GO" id="GO:0070180">
    <property type="term" value="F:large ribosomal subunit rRNA binding"/>
    <property type="evidence" value="ECO:0007669"/>
    <property type="project" value="TreeGrafter"/>
</dbReference>
<dbReference type="GO" id="GO:0003735">
    <property type="term" value="F:structural constituent of ribosome"/>
    <property type="evidence" value="ECO:0007669"/>
    <property type="project" value="InterPro"/>
</dbReference>
<dbReference type="GO" id="GO:0006412">
    <property type="term" value="P:translation"/>
    <property type="evidence" value="ECO:0007669"/>
    <property type="project" value="UniProtKB-UniRule"/>
</dbReference>
<dbReference type="CDD" id="cd00337">
    <property type="entry name" value="Ribosomal_uL14"/>
    <property type="match status" value="1"/>
</dbReference>
<dbReference type="FunFam" id="2.40.150.20:FF:000001">
    <property type="entry name" value="50S ribosomal protein L14"/>
    <property type="match status" value="1"/>
</dbReference>
<dbReference type="Gene3D" id="2.40.150.20">
    <property type="entry name" value="Ribosomal protein L14"/>
    <property type="match status" value="1"/>
</dbReference>
<dbReference type="HAMAP" id="MF_01367">
    <property type="entry name" value="Ribosomal_uL14"/>
    <property type="match status" value="1"/>
</dbReference>
<dbReference type="InterPro" id="IPR000218">
    <property type="entry name" value="Ribosomal_uL14"/>
</dbReference>
<dbReference type="InterPro" id="IPR005745">
    <property type="entry name" value="Ribosomal_uL14_bac-type"/>
</dbReference>
<dbReference type="InterPro" id="IPR019972">
    <property type="entry name" value="Ribosomal_uL14_CS"/>
</dbReference>
<dbReference type="InterPro" id="IPR036853">
    <property type="entry name" value="Ribosomal_uL14_sf"/>
</dbReference>
<dbReference type="NCBIfam" id="TIGR01067">
    <property type="entry name" value="rplN_bact"/>
    <property type="match status" value="1"/>
</dbReference>
<dbReference type="PANTHER" id="PTHR11761">
    <property type="entry name" value="50S/60S RIBOSOMAL PROTEIN L14/L23"/>
    <property type="match status" value="1"/>
</dbReference>
<dbReference type="PANTHER" id="PTHR11761:SF3">
    <property type="entry name" value="LARGE RIBOSOMAL SUBUNIT PROTEIN UL14M"/>
    <property type="match status" value="1"/>
</dbReference>
<dbReference type="Pfam" id="PF00238">
    <property type="entry name" value="Ribosomal_L14"/>
    <property type="match status" value="1"/>
</dbReference>
<dbReference type="SMART" id="SM01374">
    <property type="entry name" value="Ribosomal_L14"/>
    <property type="match status" value="1"/>
</dbReference>
<dbReference type="SUPFAM" id="SSF50193">
    <property type="entry name" value="Ribosomal protein L14"/>
    <property type="match status" value="1"/>
</dbReference>
<dbReference type="PROSITE" id="PS00049">
    <property type="entry name" value="RIBOSOMAL_L14"/>
    <property type="match status" value="1"/>
</dbReference>
<protein>
    <recommendedName>
        <fullName evidence="1">Large ribosomal subunit protein uL14</fullName>
    </recommendedName>
    <alternativeName>
        <fullName evidence="2">50S ribosomal protein L14</fullName>
    </alternativeName>
</protein>
<organism>
    <name type="scientific">Xanthomonas axonopodis pv. citri (strain 306)</name>
    <dbReference type="NCBI Taxonomy" id="190486"/>
    <lineage>
        <taxon>Bacteria</taxon>
        <taxon>Pseudomonadati</taxon>
        <taxon>Pseudomonadota</taxon>
        <taxon>Gammaproteobacteria</taxon>
        <taxon>Lysobacterales</taxon>
        <taxon>Lysobacteraceae</taxon>
        <taxon>Xanthomonas</taxon>
    </lineage>
</organism>
<feature type="chain" id="PRO_0000266583" description="Large ribosomal subunit protein uL14">
    <location>
        <begin position="1"/>
        <end position="122"/>
    </location>
</feature>
<proteinExistence type="inferred from homology"/>
<sequence>MIQMQSYLDVADNSGAKEVMCIKVLGGSKRRYAHIGDIIKVTVKDAIPRGKVKKGEVYDAVVVRTRKGVRRPDGSLIRFDGNAAVLLNNKQEPIGTRIFGPVTRELRSEKFMKIVSLAPEVL</sequence>
<gene>
    <name evidence="1" type="primary">rplN</name>
    <name type="ordered locus">XAC0982</name>
</gene>